<comment type="function">
    <text evidence="3 5 6 7">Involved in chloroplast RNA processing. Can bind RNA (PubMed:11034340). Involved in chloroplast development (PubMed:21187014). Involved in chloroplast ribosomal RNA (rRNA) processing and/or translation. Required for FtsH-mediated chloroplast biogenesis (PubMed:20935174). Involved in translation and accumulation of chloroplast ATP synthase subunits (PubMed:23076438).</text>
</comment>
<comment type="subcellular location">
    <subcellularLocation>
        <location evidence="3 4 5">Plastid</location>
        <location evidence="3 4 5">Chloroplast</location>
    </subcellularLocation>
    <text evidence="5">Accumulates in discrete foci within the chloroplast.</text>
</comment>
<comment type="tissue specificity">
    <text evidence="3">Expressed in leaves and flowers and at lower levels in stems and flower buds.</text>
</comment>
<comment type="disruption phenotype">
    <text evidence="5 6">Reduced plant size and pale-green leaf phenotype.</text>
</comment>
<comment type="similarity">
    <text evidence="10">Belongs to the PPR family. P subfamily.</text>
</comment>
<comment type="sequence caution" evidence="10">
    <conflict type="frameshift">
        <sequence resource="EMBL-CDS" id="CAB10416"/>
    </conflict>
</comment>
<comment type="sequence caution" evidence="10">
    <conflict type="frameshift">
        <sequence resource="EMBL-CDS" id="CAB78681"/>
    </conflict>
</comment>
<comment type="online information" name="Pentatricopeptide repeat proteins">
    <link uri="https://ppr.plantenergy.uwa.edu.au"/>
</comment>
<dbReference type="EMBL" id="AJ243545">
    <property type="protein sequence ID" value="CAC01928.1"/>
    <property type="molecule type" value="Genomic_DNA"/>
</dbReference>
<dbReference type="EMBL" id="Z97341">
    <property type="protein sequence ID" value="CAB10416.1"/>
    <property type="status" value="ALT_FRAME"/>
    <property type="molecule type" value="Genomic_DNA"/>
</dbReference>
<dbReference type="EMBL" id="AL161543">
    <property type="protein sequence ID" value="CAB78681.1"/>
    <property type="status" value="ALT_FRAME"/>
    <property type="molecule type" value="Genomic_DNA"/>
</dbReference>
<dbReference type="EMBL" id="CP002687">
    <property type="protein sequence ID" value="AEE83741.1"/>
    <property type="molecule type" value="Genomic_DNA"/>
</dbReference>
<dbReference type="EMBL" id="AK118908">
    <property type="protein sequence ID" value="BAC43491.1"/>
    <property type="molecule type" value="mRNA"/>
</dbReference>
<dbReference type="PIR" id="F71430">
    <property type="entry name" value="F71430"/>
</dbReference>
<dbReference type="RefSeq" id="NP_193372.6">
    <property type="nucleotide sequence ID" value="NM_117734.8"/>
</dbReference>
<dbReference type="SMR" id="Q8GWE0"/>
<dbReference type="BioGRID" id="12626">
    <property type="interactions" value="1"/>
</dbReference>
<dbReference type="FunCoup" id="Q8GWE0">
    <property type="interactions" value="1491"/>
</dbReference>
<dbReference type="IntAct" id="Q8GWE0">
    <property type="interactions" value="1"/>
</dbReference>
<dbReference type="STRING" id="3702.Q8GWE0"/>
<dbReference type="PaxDb" id="3702-AT4G16390.1"/>
<dbReference type="ProteomicsDB" id="248981"/>
<dbReference type="EnsemblPlants" id="AT4G16390.1">
    <property type="protein sequence ID" value="AT4G16390.1"/>
    <property type="gene ID" value="AT4G16390"/>
</dbReference>
<dbReference type="GeneID" id="827333"/>
<dbReference type="Gramene" id="AT4G16390.1">
    <property type="protein sequence ID" value="AT4G16390.1"/>
    <property type="gene ID" value="AT4G16390"/>
</dbReference>
<dbReference type="KEGG" id="ath:AT4G16390"/>
<dbReference type="Araport" id="AT4G16390"/>
<dbReference type="TAIR" id="AT4G16390">
    <property type="gene designation" value="SVR7"/>
</dbReference>
<dbReference type="eggNOG" id="KOG4197">
    <property type="taxonomic scope" value="Eukaryota"/>
</dbReference>
<dbReference type="HOGENOM" id="CLU_018319_0_0_1"/>
<dbReference type="InParanoid" id="Q8GWE0"/>
<dbReference type="OMA" id="RPWQAKK"/>
<dbReference type="PRO" id="PR:Q8GWE0"/>
<dbReference type="Proteomes" id="UP000006548">
    <property type="component" value="Chromosome 4"/>
</dbReference>
<dbReference type="ExpressionAtlas" id="Q8GWE0">
    <property type="expression patterns" value="baseline and differential"/>
</dbReference>
<dbReference type="GO" id="GO:0009507">
    <property type="term" value="C:chloroplast"/>
    <property type="evidence" value="ECO:0000314"/>
    <property type="project" value="TAIR"/>
</dbReference>
<dbReference type="GO" id="GO:0009570">
    <property type="term" value="C:chloroplast stroma"/>
    <property type="evidence" value="ECO:0007005"/>
    <property type="project" value="TAIR"/>
</dbReference>
<dbReference type="GO" id="GO:0003729">
    <property type="term" value="F:mRNA binding"/>
    <property type="evidence" value="ECO:0000314"/>
    <property type="project" value="TAIR"/>
</dbReference>
<dbReference type="GO" id="GO:0000166">
    <property type="term" value="F:nucleotide binding"/>
    <property type="evidence" value="ECO:0007669"/>
    <property type="project" value="UniProtKB-KW"/>
</dbReference>
<dbReference type="GO" id="GO:0009658">
    <property type="term" value="P:chloroplast organization"/>
    <property type="evidence" value="ECO:0000315"/>
    <property type="project" value="TAIR"/>
</dbReference>
<dbReference type="GO" id="GO:0031425">
    <property type="term" value="P:chloroplast RNA processing"/>
    <property type="evidence" value="ECO:0000315"/>
    <property type="project" value="TAIR"/>
</dbReference>
<dbReference type="GO" id="GO:0045727">
    <property type="term" value="P:positive regulation of translation"/>
    <property type="evidence" value="ECO:0000315"/>
    <property type="project" value="TAIR"/>
</dbReference>
<dbReference type="FunFam" id="1.25.40.10:FF:000509">
    <property type="entry name" value="Pentatricopeptide repeat-containing protein At4g16390, chloroplastic"/>
    <property type="match status" value="1"/>
</dbReference>
<dbReference type="FunFam" id="1.25.40.10:FF:000485">
    <property type="entry name" value="pentatricopeptide repeat-containing protein At4g16390, chloroplastic"/>
    <property type="match status" value="1"/>
</dbReference>
<dbReference type="FunFam" id="1.25.40.10:FF:000423">
    <property type="entry name" value="Pentatricopeptide repeat-containing protein, chloroplastic"/>
    <property type="match status" value="1"/>
</dbReference>
<dbReference type="Gene3D" id="1.25.40.10">
    <property type="entry name" value="Tetratricopeptide repeat domain"/>
    <property type="match status" value="3"/>
</dbReference>
<dbReference type="InterPro" id="IPR002885">
    <property type="entry name" value="Pentatricopeptide_rpt"/>
</dbReference>
<dbReference type="InterPro" id="IPR033443">
    <property type="entry name" value="PROP1-like_PPR_dom"/>
</dbReference>
<dbReference type="InterPro" id="IPR002625">
    <property type="entry name" value="Smr_dom"/>
</dbReference>
<dbReference type="InterPro" id="IPR011990">
    <property type="entry name" value="TPR-like_helical_dom_sf"/>
</dbReference>
<dbReference type="NCBIfam" id="TIGR00756">
    <property type="entry name" value="PPR"/>
    <property type="match status" value="8"/>
</dbReference>
<dbReference type="PANTHER" id="PTHR47447">
    <property type="entry name" value="OS03G0856100 PROTEIN"/>
    <property type="match status" value="1"/>
</dbReference>
<dbReference type="PANTHER" id="PTHR47447:SF12">
    <property type="entry name" value="PENTATRICOPEPTIDE REPEAT-CONTAINING PROTEIN ATP4 HOMOLOG, CHLOROPLASTIC"/>
    <property type="match status" value="1"/>
</dbReference>
<dbReference type="Pfam" id="PF01535">
    <property type="entry name" value="PPR"/>
    <property type="match status" value="1"/>
</dbReference>
<dbReference type="Pfam" id="PF13041">
    <property type="entry name" value="PPR_2"/>
    <property type="match status" value="1"/>
</dbReference>
<dbReference type="Pfam" id="PF13812">
    <property type="entry name" value="PPR_3"/>
    <property type="match status" value="1"/>
</dbReference>
<dbReference type="Pfam" id="PF17177">
    <property type="entry name" value="PPR_long"/>
    <property type="match status" value="1"/>
</dbReference>
<dbReference type="SMART" id="SM00463">
    <property type="entry name" value="SMR"/>
    <property type="match status" value="1"/>
</dbReference>
<dbReference type="SUPFAM" id="SSF81901">
    <property type="entry name" value="HCP-like"/>
    <property type="match status" value="1"/>
</dbReference>
<dbReference type="SUPFAM" id="SSF48452">
    <property type="entry name" value="TPR-like"/>
    <property type="match status" value="1"/>
</dbReference>
<dbReference type="PROSITE" id="PS51375">
    <property type="entry name" value="PPR"/>
    <property type="match status" value="10"/>
</dbReference>
<dbReference type="PROSITE" id="PS50828">
    <property type="entry name" value="SMR"/>
    <property type="match status" value="1"/>
</dbReference>
<reference key="1">
    <citation type="journal article" date="2000" name="FEBS Lett.">
        <title>A chloroplastic RNA-binding protein is a new member of the PPR family.</title>
        <authorList>
            <person name="Lahmy S."/>
            <person name="Barneche F."/>
            <person name="Derancourt J."/>
            <person name="Filipowicz W."/>
            <person name="Delseny M."/>
            <person name="Echeverria M."/>
        </authorList>
    </citation>
    <scope>NUCLEOTIDE SEQUENCE [GENOMIC DNA]</scope>
    <scope>RNA-BINDING</scope>
    <scope>TISSUE SPECIFICITY</scope>
    <scope>SUBCELLULAR LOCATION</scope>
</reference>
<reference key="2">
    <citation type="journal article" date="1998" name="Nature">
        <title>Analysis of 1.9 Mb of contiguous sequence from chromosome 4 of Arabidopsis thaliana.</title>
        <authorList>
            <person name="Bevan M."/>
            <person name="Bancroft I."/>
            <person name="Bent E."/>
            <person name="Love K."/>
            <person name="Goodman H.M."/>
            <person name="Dean C."/>
            <person name="Bergkamp R."/>
            <person name="Dirkse W."/>
            <person name="van Staveren M."/>
            <person name="Stiekema W."/>
            <person name="Drost L."/>
            <person name="Ridley P."/>
            <person name="Hudson S.-A."/>
            <person name="Patel K."/>
            <person name="Murphy G."/>
            <person name="Piffanelli P."/>
            <person name="Wedler H."/>
            <person name="Wedler E."/>
            <person name="Wambutt R."/>
            <person name="Weitzenegger T."/>
            <person name="Pohl T."/>
            <person name="Terryn N."/>
            <person name="Gielen J."/>
            <person name="Villarroel R."/>
            <person name="De Clercq R."/>
            <person name="van Montagu M."/>
            <person name="Lecharny A."/>
            <person name="Aubourg S."/>
            <person name="Gy I."/>
            <person name="Kreis M."/>
            <person name="Lao N."/>
            <person name="Kavanagh T."/>
            <person name="Hempel S."/>
            <person name="Kotter P."/>
            <person name="Entian K.-D."/>
            <person name="Rieger M."/>
            <person name="Schaefer M."/>
            <person name="Funk B."/>
            <person name="Mueller-Auer S."/>
            <person name="Silvey M."/>
            <person name="James R."/>
            <person name="Monfort A."/>
            <person name="Pons A."/>
            <person name="Puigdomenech P."/>
            <person name="Douka A."/>
            <person name="Voukelatou E."/>
            <person name="Milioni D."/>
            <person name="Hatzopoulos P."/>
            <person name="Piravandi E."/>
            <person name="Obermaier B."/>
            <person name="Hilbert H."/>
            <person name="Duesterhoeft A."/>
            <person name="Moores T."/>
            <person name="Jones J.D.G."/>
            <person name="Eneva T."/>
            <person name="Palme K."/>
            <person name="Benes V."/>
            <person name="Rechmann S."/>
            <person name="Ansorge W."/>
            <person name="Cooke R."/>
            <person name="Berger C."/>
            <person name="Delseny M."/>
            <person name="Voet M."/>
            <person name="Volckaert G."/>
            <person name="Mewes H.-W."/>
            <person name="Klosterman S."/>
            <person name="Schueller C."/>
            <person name="Chalwatzis N."/>
        </authorList>
    </citation>
    <scope>NUCLEOTIDE SEQUENCE [LARGE SCALE GENOMIC DNA]</scope>
    <source>
        <strain>cv. Columbia</strain>
    </source>
</reference>
<reference key="3">
    <citation type="journal article" date="1999" name="Nature">
        <title>Sequence and analysis of chromosome 4 of the plant Arabidopsis thaliana.</title>
        <authorList>
            <person name="Mayer K.F.X."/>
            <person name="Schueller C."/>
            <person name="Wambutt R."/>
            <person name="Murphy G."/>
            <person name="Volckaert G."/>
            <person name="Pohl T."/>
            <person name="Duesterhoeft A."/>
            <person name="Stiekema W."/>
            <person name="Entian K.-D."/>
            <person name="Terryn N."/>
            <person name="Harris B."/>
            <person name="Ansorge W."/>
            <person name="Brandt P."/>
            <person name="Grivell L.A."/>
            <person name="Rieger M."/>
            <person name="Weichselgartner M."/>
            <person name="de Simone V."/>
            <person name="Obermaier B."/>
            <person name="Mache R."/>
            <person name="Mueller M."/>
            <person name="Kreis M."/>
            <person name="Delseny M."/>
            <person name="Puigdomenech P."/>
            <person name="Watson M."/>
            <person name="Schmidtheini T."/>
            <person name="Reichert B."/>
            <person name="Portetelle D."/>
            <person name="Perez-Alonso M."/>
            <person name="Boutry M."/>
            <person name="Bancroft I."/>
            <person name="Vos P."/>
            <person name="Hoheisel J."/>
            <person name="Zimmermann W."/>
            <person name="Wedler H."/>
            <person name="Ridley P."/>
            <person name="Langham S.-A."/>
            <person name="McCullagh B."/>
            <person name="Bilham L."/>
            <person name="Robben J."/>
            <person name="van der Schueren J."/>
            <person name="Grymonprez B."/>
            <person name="Chuang Y.-J."/>
            <person name="Vandenbussche F."/>
            <person name="Braeken M."/>
            <person name="Weltjens I."/>
            <person name="Voet M."/>
            <person name="Bastiaens I."/>
            <person name="Aert R."/>
            <person name="Defoor E."/>
            <person name="Weitzenegger T."/>
            <person name="Bothe G."/>
            <person name="Ramsperger U."/>
            <person name="Hilbert H."/>
            <person name="Braun M."/>
            <person name="Holzer E."/>
            <person name="Brandt A."/>
            <person name="Peters S."/>
            <person name="van Staveren M."/>
            <person name="Dirkse W."/>
            <person name="Mooijman P."/>
            <person name="Klein Lankhorst R."/>
            <person name="Rose M."/>
            <person name="Hauf J."/>
            <person name="Koetter P."/>
            <person name="Berneiser S."/>
            <person name="Hempel S."/>
            <person name="Feldpausch M."/>
            <person name="Lamberth S."/>
            <person name="Van den Daele H."/>
            <person name="De Keyser A."/>
            <person name="Buysshaert C."/>
            <person name="Gielen J."/>
            <person name="Villarroel R."/>
            <person name="De Clercq R."/>
            <person name="van Montagu M."/>
            <person name="Rogers J."/>
            <person name="Cronin A."/>
            <person name="Quail M.A."/>
            <person name="Bray-Allen S."/>
            <person name="Clark L."/>
            <person name="Doggett J."/>
            <person name="Hall S."/>
            <person name="Kay M."/>
            <person name="Lennard N."/>
            <person name="McLay K."/>
            <person name="Mayes R."/>
            <person name="Pettett A."/>
            <person name="Rajandream M.A."/>
            <person name="Lyne M."/>
            <person name="Benes V."/>
            <person name="Rechmann S."/>
            <person name="Borkova D."/>
            <person name="Bloecker H."/>
            <person name="Scharfe M."/>
            <person name="Grimm M."/>
            <person name="Loehnert T.-H."/>
            <person name="Dose S."/>
            <person name="de Haan M."/>
            <person name="Maarse A.C."/>
            <person name="Schaefer M."/>
            <person name="Mueller-Auer S."/>
            <person name="Gabel C."/>
            <person name="Fuchs M."/>
            <person name="Fartmann B."/>
            <person name="Granderath K."/>
            <person name="Dauner D."/>
            <person name="Herzl A."/>
            <person name="Neumann S."/>
            <person name="Argiriou A."/>
            <person name="Vitale D."/>
            <person name="Liguori R."/>
            <person name="Piravandi E."/>
            <person name="Massenet O."/>
            <person name="Quigley F."/>
            <person name="Clabauld G."/>
            <person name="Muendlein A."/>
            <person name="Felber R."/>
            <person name="Schnabl S."/>
            <person name="Hiller R."/>
            <person name="Schmidt W."/>
            <person name="Lecharny A."/>
            <person name="Aubourg S."/>
            <person name="Chefdor F."/>
            <person name="Cooke R."/>
            <person name="Berger C."/>
            <person name="Monfort A."/>
            <person name="Casacuberta E."/>
            <person name="Gibbons T."/>
            <person name="Weber N."/>
            <person name="Vandenbol M."/>
            <person name="Bargues M."/>
            <person name="Terol J."/>
            <person name="Torres A."/>
            <person name="Perez-Perez A."/>
            <person name="Purnelle B."/>
            <person name="Bent E."/>
            <person name="Johnson S."/>
            <person name="Tacon D."/>
            <person name="Jesse T."/>
            <person name="Heijnen L."/>
            <person name="Schwarz S."/>
            <person name="Scholler P."/>
            <person name="Heber S."/>
            <person name="Francs P."/>
            <person name="Bielke C."/>
            <person name="Frishman D."/>
            <person name="Haase D."/>
            <person name="Lemcke K."/>
            <person name="Mewes H.-W."/>
            <person name="Stocker S."/>
            <person name="Zaccaria P."/>
            <person name="Bevan M."/>
            <person name="Wilson R.K."/>
            <person name="de la Bastide M."/>
            <person name="Habermann K."/>
            <person name="Parnell L."/>
            <person name="Dedhia N."/>
            <person name="Gnoj L."/>
            <person name="Schutz K."/>
            <person name="Huang E."/>
            <person name="Spiegel L."/>
            <person name="Sekhon M."/>
            <person name="Murray J."/>
            <person name="Sheet P."/>
            <person name="Cordes M."/>
            <person name="Abu-Threideh J."/>
            <person name="Stoneking T."/>
            <person name="Kalicki J."/>
            <person name="Graves T."/>
            <person name="Harmon G."/>
            <person name="Edwards J."/>
            <person name="Latreille P."/>
            <person name="Courtney L."/>
            <person name="Cloud J."/>
            <person name="Abbott A."/>
            <person name="Scott K."/>
            <person name="Johnson D."/>
            <person name="Minx P."/>
            <person name="Bentley D."/>
            <person name="Fulton B."/>
            <person name="Miller N."/>
            <person name="Greco T."/>
            <person name="Kemp K."/>
            <person name="Kramer J."/>
            <person name="Fulton L."/>
            <person name="Mardis E."/>
            <person name="Dante M."/>
            <person name="Pepin K."/>
            <person name="Hillier L.W."/>
            <person name="Nelson J."/>
            <person name="Spieth J."/>
            <person name="Ryan E."/>
            <person name="Andrews S."/>
            <person name="Geisel C."/>
            <person name="Layman D."/>
            <person name="Du H."/>
            <person name="Ali J."/>
            <person name="Berghoff A."/>
            <person name="Jones K."/>
            <person name="Drone K."/>
            <person name="Cotton M."/>
            <person name="Joshu C."/>
            <person name="Antonoiu B."/>
            <person name="Zidanic M."/>
            <person name="Strong C."/>
            <person name="Sun H."/>
            <person name="Lamar B."/>
            <person name="Yordan C."/>
            <person name="Ma P."/>
            <person name="Zhong J."/>
            <person name="Preston R."/>
            <person name="Vil D."/>
            <person name="Shekher M."/>
            <person name="Matero A."/>
            <person name="Shah R."/>
            <person name="Swaby I.K."/>
            <person name="O'Shaughnessy A."/>
            <person name="Rodriguez M."/>
            <person name="Hoffman J."/>
            <person name="Till S."/>
            <person name="Granat S."/>
            <person name="Shohdy N."/>
            <person name="Hasegawa A."/>
            <person name="Hameed A."/>
            <person name="Lodhi M."/>
            <person name="Johnson A."/>
            <person name="Chen E."/>
            <person name="Marra M.A."/>
            <person name="Martienssen R."/>
            <person name="McCombie W.R."/>
        </authorList>
    </citation>
    <scope>NUCLEOTIDE SEQUENCE [LARGE SCALE GENOMIC DNA]</scope>
    <source>
        <strain>cv. Columbia</strain>
    </source>
</reference>
<reference key="4">
    <citation type="journal article" date="2017" name="Plant J.">
        <title>Araport11: a complete reannotation of the Arabidopsis thaliana reference genome.</title>
        <authorList>
            <person name="Cheng C.Y."/>
            <person name="Krishnakumar V."/>
            <person name="Chan A.P."/>
            <person name="Thibaud-Nissen F."/>
            <person name="Schobel S."/>
            <person name="Town C.D."/>
        </authorList>
    </citation>
    <scope>GENOME REANNOTATION</scope>
    <scope>SEQUENCE REVISION</scope>
    <source>
        <strain>cv. Columbia</strain>
    </source>
</reference>
<reference key="5">
    <citation type="journal article" date="2002" name="Science">
        <title>Functional annotation of a full-length Arabidopsis cDNA collection.</title>
        <authorList>
            <person name="Seki M."/>
            <person name="Narusaka M."/>
            <person name="Kamiya A."/>
            <person name="Ishida J."/>
            <person name="Satou M."/>
            <person name="Sakurai T."/>
            <person name="Nakajima M."/>
            <person name="Enju A."/>
            <person name="Akiyama K."/>
            <person name="Oono Y."/>
            <person name="Muramatsu M."/>
            <person name="Hayashizaki Y."/>
            <person name="Kawai J."/>
            <person name="Carninci P."/>
            <person name="Itoh M."/>
            <person name="Ishii Y."/>
            <person name="Arakawa T."/>
            <person name="Shibata K."/>
            <person name="Shinagawa A."/>
            <person name="Shinozaki K."/>
        </authorList>
    </citation>
    <scope>NUCLEOTIDE SEQUENCE [LARGE SCALE MRNA]</scope>
    <source>
        <strain>cv. Columbia</strain>
    </source>
</reference>
<reference key="6">
    <citation type="journal article" date="2004" name="Plant Cell">
        <title>Genome-wide analysis of Arabidopsis pentatricopeptide repeat proteins reveals their essential role in organelle biogenesis.</title>
        <authorList>
            <person name="Lurin C."/>
            <person name="Andres C."/>
            <person name="Aubourg S."/>
            <person name="Bellaoui M."/>
            <person name="Bitton F."/>
            <person name="Bruyere C."/>
            <person name="Caboche M."/>
            <person name="Debast C."/>
            <person name="Gualberto J."/>
            <person name="Hoffmann B."/>
            <person name="Lecharny A."/>
            <person name="Le Ret M."/>
            <person name="Martin-Magniette M.-L."/>
            <person name="Mireau H."/>
            <person name="Peeters N."/>
            <person name="Renou J.-P."/>
            <person name="Szurek B."/>
            <person name="Taconnat L."/>
            <person name="Small I."/>
        </authorList>
    </citation>
    <scope>GENE FAMILY</scope>
</reference>
<reference key="7">
    <citation type="journal article" date="2008" name="PLoS ONE">
        <title>Sorting signals, N-terminal modifications and abundance of the chloroplast proteome.</title>
        <authorList>
            <person name="Zybailov B."/>
            <person name="Rutschow H."/>
            <person name="Friso G."/>
            <person name="Rudella A."/>
            <person name="Emanuelsson O."/>
            <person name="Sun Q."/>
            <person name="van Wijk K.J."/>
        </authorList>
    </citation>
    <scope>IDENTIFICATION BY MASS SPECTROMETRY</scope>
    <scope>SUBCELLULAR LOCATION [LARGE SCALE ANALYSIS]</scope>
</reference>
<reference key="8">
    <citation type="journal article" date="2010" name="BMC Plant Biol.">
        <title>A var2 leaf variegation suppressor locus, SUPPRESSOR OF VARIEGATION3, encodes a putative chloroplast translation elongation factor that is important for chloroplast development in the cold.</title>
        <authorList>
            <person name="Liu X."/>
            <person name="Rodermel S.R."/>
            <person name="Yu F."/>
        </authorList>
    </citation>
    <scope>FUNCTION</scope>
    <scope>DISRUPTION PHENOTYPE</scope>
</reference>
<reference key="9">
    <citation type="journal article" date="2010" name="Plant Physiol.">
        <title>An Arabidopsis pentatricopeptide repeat protein, SUPPRESSOR OF VARIEGATION7, is required for FtsH-mediated chloroplast biogenesis.</title>
        <authorList>
            <person name="Liu X."/>
            <person name="Yu F."/>
            <person name="Rodermel S."/>
        </authorList>
    </citation>
    <scope>FUNCTION</scope>
    <scope>SUBCELLULAR LOCATION</scope>
    <scope>DISRUPTION PHENOTYPE</scope>
</reference>
<reference key="10">
    <citation type="journal article" date="2013" name="J. Plant Res.">
        <title>Mutation of the pentatricopeptide repeat-SMR protein SVR7 impairs accumulation and translation of chloroplast ATP synthase subunits in Arabidopsis thaliana.</title>
        <authorList>
            <person name="Zoschke R."/>
            <person name="Qu Y."/>
            <person name="Zubo Y.O."/>
            <person name="Boerner T."/>
            <person name="Schmitz-Linneweber C."/>
        </authorList>
    </citation>
    <scope>FUNCTION</scope>
</reference>
<sequence length="702" mass="78243">MSFHHLCSSPSSLLHDPLPLCNLLSVYPKSTPRSFLSSYNPNSSHFHSRNLLQATHVSVQEAIPQSEKSKLVDVDLPIPEPTASKSYVWVNPKSPRASQLRRKSYDSRYSSLIKLAESLDACKPNEADVCDVITGFGGKLFEQDAVVTLNNMTNPETAPLVLNNLLETMKPSREVILYNVTMKVFRKSKDLEKSEKLFDEMLERGIKPDNATFTTIISCARQNGVPKRAVEWFEKMSSFGCEPDNVTMAAMIDAYGRAGNVDMALSLYDRARTEKWRIDAVTFSTLIRIYGVSGNYDGCLNIYEEMKALGVKPNLVIYNRLIDSMGRAKRPWQAKIIYKDLITNGFTPNWSTYAALVRAYGRARYGDDALAIYREMKEKGLSLTVILYNTLLSMCADNRYVDEAFEIFQDMKNCETCDPDSWTFSSLITVYACSGRVSEAEAALLQMREAGFEPTLFVLTSVIQCYGKAKQVDDVVRTFDQVLELGITPDDRFCGCLLNVMTQTPSEEIGKLIGCVEKAKPKLGQVVKMLVEEQNCEEGVFKKEASELIDSIGSDVKKAYLNCLIDLCVNLNKLERACEILQLGLEYDIYTGLQSKSATQWSLHLKSLSLGAALTALHVWMNDLSEAALESGEEFPPLLGINTGHGKHKYSDKGLAAVFESHLKELNAPFHEAPDKVGWFLTTSVAAKAWLESRRSAGGVSA</sequence>
<proteinExistence type="evidence at protein level"/>
<organism>
    <name type="scientific">Arabidopsis thaliana</name>
    <name type="common">Mouse-ear cress</name>
    <dbReference type="NCBI Taxonomy" id="3702"/>
    <lineage>
        <taxon>Eukaryota</taxon>
        <taxon>Viridiplantae</taxon>
        <taxon>Streptophyta</taxon>
        <taxon>Embryophyta</taxon>
        <taxon>Tracheophyta</taxon>
        <taxon>Spermatophyta</taxon>
        <taxon>Magnoliopsida</taxon>
        <taxon>eudicotyledons</taxon>
        <taxon>Gunneridae</taxon>
        <taxon>Pentapetalae</taxon>
        <taxon>rosids</taxon>
        <taxon>malvids</taxon>
        <taxon>Brassicales</taxon>
        <taxon>Brassicaceae</taxon>
        <taxon>Camelineae</taxon>
        <taxon>Arabidopsis</taxon>
    </lineage>
</organism>
<name>PP314_ARATH</name>
<accession>Q8GWE0</accession>
<accession>F4JLT2</accession>
<accession>O23484</accession>
<accession>Q9LF83</accession>
<protein>
    <recommendedName>
        <fullName evidence="10">Pentatricopeptide repeat-containing protein At4g16390, chloroplastic</fullName>
    </recommendedName>
    <alternativeName>
        <fullName evidence="8">Chloroplastic RNA-binding protein P67</fullName>
    </alternativeName>
    <alternativeName>
        <fullName evidence="9">Protein SUPPRESSOR OF VARIEGATION 7</fullName>
    </alternativeName>
</protein>
<evidence type="ECO:0000255" key="1"/>
<evidence type="ECO:0000255" key="2">
    <source>
        <dbReference type="PROSITE-ProRule" id="PRU00321"/>
    </source>
</evidence>
<evidence type="ECO:0000269" key="3">
    <source>
    </source>
</evidence>
<evidence type="ECO:0000269" key="4">
    <source>
    </source>
</evidence>
<evidence type="ECO:0000269" key="5">
    <source>
    </source>
</evidence>
<evidence type="ECO:0000269" key="6">
    <source>
    </source>
</evidence>
<evidence type="ECO:0000269" key="7">
    <source>
    </source>
</evidence>
<evidence type="ECO:0000303" key="8">
    <source>
    </source>
</evidence>
<evidence type="ECO:0000303" key="9">
    <source>
    </source>
</evidence>
<evidence type="ECO:0000305" key="10"/>
<keyword id="KW-0150">Chloroplast</keyword>
<keyword id="KW-0547">Nucleotide-binding</keyword>
<keyword id="KW-0934">Plastid</keyword>
<keyword id="KW-1185">Reference proteome</keyword>
<keyword id="KW-0677">Repeat</keyword>
<keyword id="KW-0694">RNA-binding</keyword>
<keyword id="KW-0809">Transit peptide</keyword>
<feature type="transit peptide" description="Chloroplast" evidence="1">
    <location>
        <begin position="1"/>
        <end position="53"/>
    </location>
</feature>
<feature type="chain" id="PRO_0000363432" description="Pentatricopeptide repeat-containing protein At4g16390, chloroplastic">
    <location>
        <begin position="54"/>
        <end position="702"/>
    </location>
</feature>
<feature type="repeat" description="PPR 1">
    <location>
        <begin position="174"/>
        <end position="208"/>
    </location>
</feature>
<feature type="repeat" description="PPR 2">
    <location>
        <begin position="209"/>
        <end position="243"/>
    </location>
</feature>
<feature type="repeat" description="PPR 3">
    <location>
        <begin position="244"/>
        <end position="278"/>
    </location>
</feature>
<feature type="repeat" description="PPR 4">
    <location>
        <begin position="279"/>
        <end position="313"/>
    </location>
</feature>
<feature type="repeat" description="PPR 5">
    <location>
        <begin position="314"/>
        <end position="348"/>
    </location>
</feature>
<feature type="repeat" description="PPR 6">
    <location>
        <begin position="349"/>
        <end position="383"/>
    </location>
</feature>
<feature type="repeat" description="PPR 7">
    <location>
        <begin position="384"/>
        <end position="414"/>
    </location>
</feature>
<feature type="repeat" description="PPR 8">
    <location>
        <begin position="420"/>
        <end position="454"/>
    </location>
</feature>
<feature type="repeat" description="PPR 9">
    <location>
        <begin position="455"/>
        <end position="489"/>
    </location>
</feature>
<feature type="domain" description="Smr" evidence="2">
    <location>
        <begin position="603"/>
        <end position="688"/>
    </location>
</feature>
<feature type="sequence conflict" description="In Ref. 1; CAC01928 and 5; BAC43491." evidence="10" ref="1 5">
    <original>NR</original>
    <variation>IG</variation>
    <location>
        <begin position="398"/>
        <end position="399"/>
    </location>
</feature>
<feature type="sequence conflict" description="In Ref. 2; CAB10416 and 3; CAB78681." evidence="10" ref="2 3">
    <original>Y</original>
    <variation>H</variation>
    <location>
        <position position="400"/>
    </location>
</feature>
<feature type="sequence conflict" description="In Ref. 2; CAB10416 and 3; CAB78681." evidence="10" ref="2 3">
    <original>E</original>
    <variation>K</variation>
    <location>
        <position position="439"/>
    </location>
</feature>
<feature type="sequence conflict" description="In Ref. 2; CAB10416 and 3; CAB78681." evidence="10" ref="2 3">
    <original>M</original>
    <variation>I</variation>
    <location>
        <position position="447"/>
    </location>
</feature>
<feature type="sequence conflict" description="In Ref. 1; CAC01928." evidence="10" ref="1">
    <original>S</original>
    <variation>F</variation>
    <location>
        <position position="693"/>
    </location>
</feature>
<gene>
    <name evidence="8" type="primary">P67</name>
    <name evidence="9" type="synonym">SVR7</name>
    <name type="ordered locus">At4g16390</name>
    <name type="ORF">dl4225w</name>
    <name type="ORF">FCAALL.354</name>
</gene>